<accession>Q46437</accession>
<keyword id="KW-0067">ATP-binding</keyword>
<keyword id="KW-0235">DNA replication</keyword>
<keyword id="KW-0238">DNA-binding</keyword>
<keyword id="KW-0347">Helicase</keyword>
<keyword id="KW-0378">Hydrolase</keyword>
<keyword id="KW-0413">Isomerase</keyword>
<keyword id="KW-0547">Nucleotide-binding</keyword>
<keyword id="KW-0614">Plasmid</keyword>
<keyword id="KW-0639">Primosome</keyword>
<protein>
    <recommendedName>
        <fullName>Probable plasmid replicative DNA helicase</fullName>
        <ecNumber evidence="1">5.6.2.3</ecNumber>
    </recommendedName>
    <alternativeName>
        <fullName evidence="4">DNA 5'-3' helicase pGP1-D</fullName>
    </alternativeName>
    <alternativeName>
        <fullName>DnaB-like protein</fullName>
    </alternativeName>
    <alternativeName>
        <fullName evidence="3">Virulence plasmid helicase pGP1-D</fullName>
    </alternativeName>
</protein>
<name>GP1D_CHLMU</name>
<comment type="function">
    <text evidence="1">A replicative DNA helicase, it participates in initiation and elongation during DNA replication. Travels ahead of the DNA replisome, separating dsDNA into templates for DNA synthesis. A processive ATP-dependent 5'-3' DNA helicase it has DNA-dependent ATPase activity.</text>
</comment>
<comment type="catalytic activity">
    <reaction evidence="1">
        <text>Couples ATP hydrolysis with the unwinding of duplex DNA at the replication fork by translocating in the 5'-3' direction. This creates two antiparallel DNA single strands (ssDNA). The leading ssDNA polymer is the template for DNA polymerase III holoenzyme which synthesizes a continuous strand.</text>
        <dbReference type="EC" id="5.6.2.3"/>
    </reaction>
</comment>
<comment type="catalytic activity">
    <reaction evidence="1">
        <text>ATP + H2O = ADP + phosphate + H(+)</text>
        <dbReference type="Rhea" id="RHEA:13065"/>
        <dbReference type="ChEBI" id="CHEBI:15377"/>
        <dbReference type="ChEBI" id="CHEBI:15378"/>
        <dbReference type="ChEBI" id="CHEBI:30616"/>
        <dbReference type="ChEBI" id="CHEBI:43474"/>
        <dbReference type="ChEBI" id="CHEBI:456216"/>
        <dbReference type="EC" id="5.6.2.3"/>
    </reaction>
</comment>
<comment type="subunit">
    <text evidence="1">Homohexamer.</text>
</comment>
<comment type="similarity">
    <text evidence="4">Belongs to the helicase family. DnaB subfamily.</text>
</comment>
<dbReference type="EC" id="5.6.2.3" evidence="1"/>
<dbReference type="EMBL" id="X78726">
    <property type="protein sequence ID" value="CAA55374.1"/>
    <property type="molecule type" value="Genomic_DNA"/>
</dbReference>
<dbReference type="EMBL" id="AE002162">
    <property type="protein sequence ID" value="AAF39713.1"/>
    <property type="molecule type" value="Genomic_DNA"/>
</dbReference>
<dbReference type="PIR" id="S44161">
    <property type="entry name" value="S44161"/>
</dbReference>
<dbReference type="RefSeq" id="WP_010231984.1">
    <property type="nucleotide sequence ID" value="NZ_ACOV01000005.1"/>
</dbReference>
<dbReference type="SMR" id="Q46437"/>
<dbReference type="GeneID" id="1245519"/>
<dbReference type="KEGG" id="cmu:TC_A03"/>
<dbReference type="PATRIC" id="fig|243161.6.peg.3"/>
<dbReference type="eggNOG" id="COG0305">
    <property type="taxonomic scope" value="Bacteria"/>
</dbReference>
<dbReference type="HOGENOM" id="CLU_005373_0_1_0"/>
<dbReference type="OrthoDB" id="9773982at2"/>
<dbReference type="Proteomes" id="UP000000800">
    <property type="component" value="Plasmid pMoPn"/>
</dbReference>
<dbReference type="GO" id="GO:0005829">
    <property type="term" value="C:cytosol"/>
    <property type="evidence" value="ECO:0007669"/>
    <property type="project" value="TreeGrafter"/>
</dbReference>
<dbReference type="GO" id="GO:1990077">
    <property type="term" value="C:primosome complex"/>
    <property type="evidence" value="ECO:0007669"/>
    <property type="project" value="UniProtKB-KW"/>
</dbReference>
<dbReference type="GO" id="GO:0005524">
    <property type="term" value="F:ATP binding"/>
    <property type="evidence" value="ECO:0007669"/>
    <property type="project" value="UniProtKB-KW"/>
</dbReference>
<dbReference type="GO" id="GO:0016887">
    <property type="term" value="F:ATP hydrolysis activity"/>
    <property type="evidence" value="ECO:0007669"/>
    <property type="project" value="InterPro"/>
</dbReference>
<dbReference type="GO" id="GO:0003677">
    <property type="term" value="F:DNA binding"/>
    <property type="evidence" value="ECO:0007669"/>
    <property type="project" value="UniProtKB-KW"/>
</dbReference>
<dbReference type="GO" id="GO:0003678">
    <property type="term" value="F:DNA helicase activity"/>
    <property type="evidence" value="ECO:0007669"/>
    <property type="project" value="InterPro"/>
</dbReference>
<dbReference type="GO" id="GO:0006269">
    <property type="term" value="P:DNA replication, synthesis of primer"/>
    <property type="evidence" value="ECO:0007669"/>
    <property type="project" value="UniProtKB-KW"/>
</dbReference>
<dbReference type="CDD" id="cd00984">
    <property type="entry name" value="DnaB_C"/>
    <property type="match status" value="1"/>
</dbReference>
<dbReference type="Gene3D" id="3.40.50.300">
    <property type="entry name" value="P-loop containing nucleotide triphosphate hydrolases"/>
    <property type="match status" value="1"/>
</dbReference>
<dbReference type="InterPro" id="IPR003593">
    <property type="entry name" value="AAA+_ATPase"/>
</dbReference>
<dbReference type="InterPro" id="IPR036185">
    <property type="entry name" value="DNA_heli_DnaB-like_N_sf"/>
</dbReference>
<dbReference type="InterPro" id="IPR007694">
    <property type="entry name" value="DNA_helicase_DnaB-like_C"/>
</dbReference>
<dbReference type="InterPro" id="IPR007693">
    <property type="entry name" value="DNA_helicase_DnaB-like_N"/>
</dbReference>
<dbReference type="InterPro" id="IPR027417">
    <property type="entry name" value="P-loop_NTPase"/>
</dbReference>
<dbReference type="PANTHER" id="PTHR30153:SF2">
    <property type="entry name" value="REPLICATIVE DNA HELICASE"/>
    <property type="match status" value="1"/>
</dbReference>
<dbReference type="PANTHER" id="PTHR30153">
    <property type="entry name" value="REPLICATIVE DNA HELICASE DNAB"/>
    <property type="match status" value="1"/>
</dbReference>
<dbReference type="Pfam" id="PF00772">
    <property type="entry name" value="DnaB"/>
    <property type="match status" value="1"/>
</dbReference>
<dbReference type="Pfam" id="PF03796">
    <property type="entry name" value="DnaB_C"/>
    <property type="match status" value="1"/>
</dbReference>
<dbReference type="SMART" id="SM00382">
    <property type="entry name" value="AAA"/>
    <property type="match status" value="1"/>
</dbReference>
<dbReference type="SUPFAM" id="SSF48024">
    <property type="entry name" value="N-terminal domain of DnaB helicase"/>
    <property type="match status" value="1"/>
</dbReference>
<dbReference type="SUPFAM" id="SSF52540">
    <property type="entry name" value="P-loop containing nucleoside triphosphate hydrolases"/>
    <property type="match status" value="1"/>
</dbReference>
<dbReference type="PROSITE" id="PS51199">
    <property type="entry name" value="SF4_HELICASE"/>
    <property type="match status" value="1"/>
</dbReference>
<organism>
    <name type="scientific">Chlamydia muridarum (strain MoPn / Nigg)</name>
    <dbReference type="NCBI Taxonomy" id="243161"/>
    <lineage>
        <taxon>Bacteria</taxon>
        <taxon>Pseudomonadati</taxon>
        <taxon>Chlamydiota</taxon>
        <taxon>Chlamydiia</taxon>
        <taxon>Chlamydiales</taxon>
        <taxon>Chlamydiaceae</taxon>
        <taxon>Chlamydia/Chlamydophila group</taxon>
        <taxon>Chlamydia</taxon>
    </lineage>
</organism>
<proteinExistence type="inferred from homology"/>
<feature type="chain" id="PRO_0000102036" description="Probable plasmid replicative DNA helicase">
    <location>
        <begin position="1"/>
        <end position="451"/>
    </location>
</feature>
<feature type="domain" description="SF4 helicase" evidence="2">
    <location>
        <begin position="194"/>
        <end position="451"/>
    </location>
</feature>
<feature type="binding site" evidence="2">
    <location>
        <begin position="225"/>
        <end position="232"/>
    </location>
    <ligand>
        <name>ATP</name>
        <dbReference type="ChEBI" id="CHEBI:30616"/>
    </ligand>
</feature>
<sequence>MKTNSEIENRMQDIEYALLGKALVFEDCTEYILRQLVNYEFKCSRHKNIFIVFKHLKDNALPITVDSAWEELLRRRVKDIDKSYLGIMLHDAMFNDKLRPISHTVLLDDLSVCSAEENLTNFIFRSFNEYNENPLRRSPFLLLDRIKDRLDRTIAKTFSTRSVRGRSVYDIFSQAELGVLARIKKRRAAYSENNDSFYDGLPTGYQDIDSKGVILANGNFVIIAARPSIGKTALAIDIAINIAIHQRRRVGFLSLEMSAGQIVERIISNLTGVSGEKLQRGSLSEEEIFCIEEAGNTIRDSHLYICSDNQYKLNLIANQIRLLKRDDRVDVIFIDYLQLINSSVGENRQNEIADISRTLRGLAAELNIPIVCLSQLSRKVEDRANKVPMLSDLRDSGQIEQDADVILFINRKETSPNCEITVGKNRHGSVFSTVLQFDPKTSKFSAIKKVW</sequence>
<gene>
    <name evidence="5" type="ordered locus">TC_A03</name>
</gene>
<evidence type="ECO:0000250" key="1">
    <source>
        <dbReference type="UniProtKB" id="P0ACB0"/>
    </source>
</evidence>
<evidence type="ECO:0000255" key="2">
    <source>
        <dbReference type="PROSITE-ProRule" id="PRU00596"/>
    </source>
</evidence>
<evidence type="ECO:0000303" key="3">
    <source>
    </source>
</evidence>
<evidence type="ECO:0000305" key="4"/>
<evidence type="ECO:0000312" key="5">
    <source>
        <dbReference type="EMBL" id="AAF39713.1"/>
    </source>
</evidence>
<geneLocation type="plasmid">
    <name>pMoPn</name>
</geneLocation>
<reference key="1">
    <citation type="journal article" date="1997" name="Microbiology">
        <title>Plasmid diversity in Chlamydia.</title>
        <authorList>
            <person name="Thomas N.S."/>
            <person name="Lusher M."/>
            <person name="Storey C.C."/>
            <person name="Clarke I.N."/>
        </authorList>
    </citation>
    <scope>NUCLEOTIDE SEQUENCE [GENOMIC DNA]</scope>
    <source>
        <strain>MoPn / Nigg</strain>
    </source>
</reference>
<reference key="2">
    <citation type="journal article" date="2000" name="Nucleic Acids Res.">
        <title>Genome sequences of Chlamydia trachomatis MoPn and Chlamydia pneumoniae AR39.</title>
        <authorList>
            <person name="Read T.D."/>
            <person name="Brunham R.C."/>
            <person name="Shen C."/>
            <person name="Gill S.R."/>
            <person name="Heidelberg J.F."/>
            <person name="White O."/>
            <person name="Hickey E.K."/>
            <person name="Peterson J.D."/>
            <person name="Utterback T.R."/>
            <person name="Berry K.J."/>
            <person name="Bass S."/>
            <person name="Linher K.D."/>
            <person name="Weidman J.F."/>
            <person name="Khouri H.M."/>
            <person name="Craven B."/>
            <person name="Bowman C."/>
            <person name="Dodson R.J."/>
            <person name="Gwinn M.L."/>
            <person name="Nelson W.C."/>
            <person name="DeBoy R.T."/>
            <person name="Kolonay J.F."/>
            <person name="McClarty G."/>
            <person name="Salzberg S.L."/>
            <person name="Eisen J.A."/>
            <person name="Fraser C.M."/>
        </authorList>
    </citation>
    <scope>NUCLEOTIDE SEQUENCE [LARGE SCALE GENOMIC DNA]</scope>
    <source>
        <strain>MoPn / Nigg</strain>
    </source>
</reference>